<accession>Q3A2B3</accession>
<keyword id="KW-1185">Reference proteome</keyword>
<keyword id="KW-0687">Ribonucleoprotein</keyword>
<keyword id="KW-0689">Ribosomal protein</keyword>
<organism>
    <name type="scientific">Syntrophotalea carbinolica (strain DSM 2380 / NBRC 103641 / GraBd1)</name>
    <name type="common">Pelobacter carbinolicus</name>
    <dbReference type="NCBI Taxonomy" id="338963"/>
    <lineage>
        <taxon>Bacteria</taxon>
        <taxon>Pseudomonadati</taxon>
        <taxon>Thermodesulfobacteriota</taxon>
        <taxon>Desulfuromonadia</taxon>
        <taxon>Desulfuromonadales</taxon>
        <taxon>Syntrophotaleaceae</taxon>
        <taxon>Syntrophotalea</taxon>
    </lineage>
</organism>
<feature type="chain" id="PRO_0000266722" description="Small ribosomal subunit protein bS21">
    <location>
        <begin position="1"/>
        <end position="64"/>
    </location>
</feature>
<feature type="region of interest" description="Disordered" evidence="2">
    <location>
        <begin position="37"/>
        <end position="64"/>
    </location>
</feature>
<feature type="compositionally biased region" description="Basic residues" evidence="2">
    <location>
        <begin position="53"/>
        <end position="64"/>
    </location>
</feature>
<gene>
    <name evidence="1" type="primary">rpsU</name>
    <name type="ordered locus">Pcar_2255</name>
</gene>
<reference key="1">
    <citation type="submission" date="2005-10" db="EMBL/GenBank/DDBJ databases">
        <title>Complete sequence of Pelobacter carbinolicus DSM 2380.</title>
        <authorList>
            <person name="Copeland A."/>
            <person name="Lucas S."/>
            <person name="Lapidus A."/>
            <person name="Barry K."/>
            <person name="Detter J.C."/>
            <person name="Glavina T."/>
            <person name="Hammon N."/>
            <person name="Israni S."/>
            <person name="Pitluck S."/>
            <person name="Chertkov O."/>
            <person name="Schmutz J."/>
            <person name="Larimer F."/>
            <person name="Land M."/>
            <person name="Kyrpides N."/>
            <person name="Ivanova N."/>
            <person name="Richardson P."/>
        </authorList>
    </citation>
    <scope>NUCLEOTIDE SEQUENCE [LARGE SCALE GENOMIC DNA]</scope>
    <source>
        <strain>DSM 2380 / NBRC 103641 / GraBd1</strain>
    </source>
</reference>
<name>RS21_SYNC1</name>
<dbReference type="EMBL" id="CP000142">
    <property type="protein sequence ID" value="ABA89494.1"/>
    <property type="molecule type" value="Genomic_DNA"/>
</dbReference>
<dbReference type="RefSeq" id="WP_011342011.1">
    <property type="nucleotide sequence ID" value="NC_007498.2"/>
</dbReference>
<dbReference type="SMR" id="Q3A2B3"/>
<dbReference type="STRING" id="338963.Pcar_2255"/>
<dbReference type="KEGG" id="pca:Pcar_2255"/>
<dbReference type="eggNOG" id="COG0828">
    <property type="taxonomic scope" value="Bacteria"/>
</dbReference>
<dbReference type="HOGENOM" id="CLU_159258_0_2_7"/>
<dbReference type="OrthoDB" id="9811907at2"/>
<dbReference type="Proteomes" id="UP000002534">
    <property type="component" value="Chromosome"/>
</dbReference>
<dbReference type="GO" id="GO:1990904">
    <property type="term" value="C:ribonucleoprotein complex"/>
    <property type="evidence" value="ECO:0007669"/>
    <property type="project" value="UniProtKB-KW"/>
</dbReference>
<dbReference type="GO" id="GO:0005840">
    <property type="term" value="C:ribosome"/>
    <property type="evidence" value="ECO:0007669"/>
    <property type="project" value="UniProtKB-KW"/>
</dbReference>
<dbReference type="GO" id="GO:0003735">
    <property type="term" value="F:structural constituent of ribosome"/>
    <property type="evidence" value="ECO:0007669"/>
    <property type="project" value="InterPro"/>
</dbReference>
<dbReference type="GO" id="GO:0006412">
    <property type="term" value="P:translation"/>
    <property type="evidence" value="ECO:0007669"/>
    <property type="project" value="UniProtKB-UniRule"/>
</dbReference>
<dbReference type="Gene3D" id="1.20.5.1150">
    <property type="entry name" value="Ribosomal protein S8"/>
    <property type="match status" value="1"/>
</dbReference>
<dbReference type="HAMAP" id="MF_00358">
    <property type="entry name" value="Ribosomal_bS21"/>
    <property type="match status" value="1"/>
</dbReference>
<dbReference type="InterPro" id="IPR001911">
    <property type="entry name" value="Ribosomal_bS21"/>
</dbReference>
<dbReference type="InterPro" id="IPR038380">
    <property type="entry name" value="Ribosomal_bS21_sf"/>
</dbReference>
<dbReference type="NCBIfam" id="TIGR00030">
    <property type="entry name" value="S21p"/>
    <property type="match status" value="1"/>
</dbReference>
<dbReference type="PANTHER" id="PTHR21109">
    <property type="entry name" value="MITOCHONDRIAL 28S RIBOSOMAL PROTEIN S21"/>
    <property type="match status" value="1"/>
</dbReference>
<dbReference type="PANTHER" id="PTHR21109:SF0">
    <property type="entry name" value="SMALL RIBOSOMAL SUBUNIT PROTEIN BS21M"/>
    <property type="match status" value="1"/>
</dbReference>
<dbReference type="Pfam" id="PF01165">
    <property type="entry name" value="Ribosomal_S21"/>
    <property type="match status" value="1"/>
</dbReference>
<dbReference type="PRINTS" id="PR00976">
    <property type="entry name" value="RIBOSOMALS21"/>
</dbReference>
<protein>
    <recommendedName>
        <fullName evidence="1">Small ribosomal subunit protein bS21</fullName>
    </recommendedName>
    <alternativeName>
        <fullName evidence="3">30S ribosomal protein S21</fullName>
    </alternativeName>
</protein>
<comment type="similarity">
    <text evidence="1">Belongs to the bacterial ribosomal protein bS21 family.</text>
</comment>
<proteinExistence type="inferred from homology"/>
<sequence length="64" mass="8005">MEIQVVDNNVEKAIRVLKRKLQQEGLFREMKQRKFYEKPSVKRKRKEKEAQRRLRKKMRMMKKA</sequence>
<evidence type="ECO:0000255" key="1">
    <source>
        <dbReference type="HAMAP-Rule" id="MF_00358"/>
    </source>
</evidence>
<evidence type="ECO:0000256" key="2">
    <source>
        <dbReference type="SAM" id="MobiDB-lite"/>
    </source>
</evidence>
<evidence type="ECO:0000305" key="3"/>